<keyword id="KW-0025">Alternative splicing</keyword>
<keyword id="KW-0238">DNA-binding</keyword>
<keyword id="KW-0539">Nucleus</keyword>
<keyword id="KW-1185">Reference proteome</keyword>
<keyword id="KW-0677">Repeat</keyword>
<keyword id="KW-0804">Transcription</keyword>
<keyword id="KW-0805">Transcription regulation</keyword>
<evidence type="ECO:0000255" key="1">
    <source>
        <dbReference type="PROSITE-ProRule" id="PRU00326"/>
    </source>
</evidence>
<evidence type="ECO:0000256" key="2">
    <source>
        <dbReference type="SAM" id="MobiDB-lite"/>
    </source>
</evidence>
<evidence type="ECO:0000303" key="3">
    <source>
    </source>
</evidence>
<evidence type="ECO:0000305" key="4"/>
<gene>
    <name type="ordered locus">At2g16210</name>
    <name type="ORF">F7H1.23</name>
</gene>
<proteinExistence type="evidence at transcript level"/>
<reference key="1">
    <citation type="journal article" date="1999" name="Nature">
        <title>Sequence and analysis of chromosome 2 of the plant Arabidopsis thaliana.</title>
        <authorList>
            <person name="Lin X."/>
            <person name="Kaul S."/>
            <person name="Rounsley S.D."/>
            <person name="Shea T.P."/>
            <person name="Benito M.-I."/>
            <person name="Town C.D."/>
            <person name="Fujii C.Y."/>
            <person name="Mason T.M."/>
            <person name="Bowman C.L."/>
            <person name="Barnstead M.E."/>
            <person name="Feldblyum T.V."/>
            <person name="Buell C.R."/>
            <person name="Ketchum K.A."/>
            <person name="Lee J.J."/>
            <person name="Ronning C.M."/>
            <person name="Koo H.L."/>
            <person name="Moffat K.S."/>
            <person name="Cronin L.A."/>
            <person name="Shen M."/>
            <person name="Pai G."/>
            <person name="Van Aken S."/>
            <person name="Umayam L."/>
            <person name="Tallon L.J."/>
            <person name="Gill J.E."/>
            <person name="Adams M.D."/>
            <person name="Carrera A.J."/>
            <person name="Creasy T.H."/>
            <person name="Goodman H.M."/>
            <person name="Somerville C.R."/>
            <person name="Copenhaver G.P."/>
            <person name="Preuss D."/>
            <person name="Nierman W.C."/>
            <person name="White O."/>
            <person name="Eisen J.A."/>
            <person name="Salzberg S.L."/>
            <person name="Fraser C.M."/>
            <person name="Venter J.C."/>
        </authorList>
    </citation>
    <scope>NUCLEOTIDE SEQUENCE [LARGE SCALE GENOMIC DNA]</scope>
    <source>
        <strain>cv. Columbia</strain>
    </source>
</reference>
<reference key="2">
    <citation type="journal article" date="2017" name="Plant J.">
        <title>Araport11: a complete reannotation of the Arabidopsis thaliana reference genome.</title>
        <authorList>
            <person name="Cheng C.Y."/>
            <person name="Krishnakumar V."/>
            <person name="Chan A.P."/>
            <person name="Thibaud-Nissen F."/>
            <person name="Schobel S."/>
            <person name="Town C.D."/>
        </authorList>
    </citation>
    <scope>GENOME REANNOTATION</scope>
    <source>
        <strain>cv. Columbia</strain>
    </source>
</reference>
<reference key="3">
    <citation type="journal article" date="2002" name="Plant Physiol.">
        <title>Cloning and sequencing of cDNAs for hypothetical genes from chromosome 2 of Arabidopsis.</title>
        <authorList>
            <person name="Xiao Y.-L."/>
            <person name="Malik M."/>
            <person name="Whitelaw C.A."/>
            <person name="Town C.D."/>
        </authorList>
    </citation>
    <scope>NUCLEOTIDE SEQUENCE [LARGE SCALE MRNA] (ISOFORMS 1 AND 2)</scope>
    <source>
        <strain>cv. Columbia</strain>
    </source>
</reference>
<reference key="4">
    <citation type="submission" date="2005-02" db="EMBL/GenBank/DDBJ databases">
        <authorList>
            <person name="Underwood B.A."/>
            <person name="Xiao Y.-L."/>
            <person name="Moskal W.A. Jr."/>
            <person name="Monaghan E.L."/>
            <person name="Wang W."/>
            <person name="Redman J.C."/>
            <person name="Wu H.C."/>
            <person name="Utterback T."/>
            <person name="Town C.D."/>
        </authorList>
    </citation>
    <scope>NUCLEOTIDE SEQUENCE [LARGE SCALE MRNA] (ISOFORM 1)</scope>
    <source>
        <strain>cv. Columbia</strain>
    </source>
</reference>
<reference key="5">
    <citation type="journal article" date="2008" name="Trends Plant Sci.">
        <title>The plant B3 superfamily.</title>
        <authorList>
            <person name="Swaminathan K."/>
            <person name="Peterson K."/>
            <person name="Jack T."/>
        </authorList>
    </citation>
    <scope>GENE FAMILY</scope>
</reference>
<sequence>MATNAGYLRCKEERKNESFFKVVQSINVSSENKRALPHDFSRSFTDKELSRKMKIRAQWGNSWEVGISKNPRFYFMEKSGWEKFVRDNALGNSELLTFTHKGKMHFTVNIFKLDGKEMMQPPQSRSFFASSSRIKTEQEENDIKEEVVVSSNRGQTTAAESKGRKLNLGKRAAKESQSSKRTEKVVRARSDYAGASSSTAAAFTILFKQGYLVFLRIPNSVSKDQVPDEKTVFKIHHPNGKKSWNVVYLERFGAFSGGWRRVVKEYPLAVGDTCKFTFIKPKELLLVVSKP</sequence>
<comment type="subcellular location">
    <subcellularLocation>
        <location evidence="1">Nucleus</location>
    </subcellularLocation>
</comment>
<comment type="alternative products">
    <event type="alternative splicing"/>
    <isoform>
        <id>Q5BPT7-1</id>
        <name>1</name>
        <sequence type="displayed"/>
    </isoform>
    <isoform>
        <id>Q5BPT7-2</id>
        <name>2</name>
        <sequence type="described" ref="VSP_037332 VSP_037333"/>
    </isoform>
</comment>
<comment type="miscellaneous">
    <molecule>Isoform 2</molecule>
    <text evidence="4">May be due to an intron retention.</text>
</comment>
<comment type="sequence caution" evidence="4">
    <conflict type="erroneous gene model prediction">
        <sequence resource="EMBL-CDS" id="AAD26962"/>
    </conflict>
</comment>
<protein>
    <recommendedName>
        <fullName>B3 domain-containing protein At2g16210</fullName>
    </recommendedName>
</protein>
<dbReference type="EMBL" id="AC007134">
    <property type="protein sequence ID" value="AAD26962.1"/>
    <property type="status" value="ALT_SEQ"/>
    <property type="molecule type" value="Genomic_DNA"/>
</dbReference>
<dbReference type="EMBL" id="CP002685">
    <property type="protein sequence ID" value="AEC06473.1"/>
    <property type="molecule type" value="Genomic_DNA"/>
</dbReference>
<dbReference type="EMBL" id="CP002685">
    <property type="protein sequence ID" value="AEC06474.1"/>
    <property type="molecule type" value="Genomic_DNA"/>
</dbReference>
<dbReference type="EMBL" id="AY247810">
    <property type="protein sequence ID" value="AAO89204.1"/>
    <property type="molecule type" value="mRNA"/>
</dbReference>
<dbReference type="EMBL" id="AY247811">
    <property type="protein sequence ID" value="AAO89205.1"/>
    <property type="molecule type" value="mRNA"/>
</dbReference>
<dbReference type="EMBL" id="AY924741">
    <property type="protein sequence ID" value="AAX23816.1"/>
    <property type="molecule type" value="mRNA"/>
</dbReference>
<dbReference type="PIR" id="H84537">
    <property type="entry name" value="H84537"/>
</dbReference>
<dbReference type="RefSeq" id="NP_179217.2">
    <molecule id="Q5BPT7-1"/>
    <property type="nucleotide sequence ID" value="NM_127178.3"/>
</dbReference>
<dbReference type="RefSeq" id="NP_973471.1">
    <molecule id="Q5BPT7-2"/>
    <property type="nucleotide sequence ID" value="NM_201742.1"/>
</dbReference>
<dbReference type="SMR" id="Q5BPT7"/>
<dbReference type="BioGRID" id="1477">
    <property type="interactions" value="4"/>
</dbReference>
<dbReference type="FunCoup" id="Q5BPT7">
    <property type="interactions" value="75"/>
</dbReference>
<dbReference type="IntAct" id="Q5BPT7">
    <property type="interactions" value="4"/>
</dbReference>
<dbReference type="STRING" id="3702.Q5BPT7"/>
<dbReference type="iPTMnet" id="Q5BPT7"/>
<dbReference type="PaxDb" id="3702-AT2G16210.1"/>
<dbReference type="EnsemblPlants" id="AT2G16210.1">
    <molecule id="Q5BPT7-1"/>
    <property type="protein sequence ID" value="AT2G16210.1"/>
    <property type="gene ID" value="AT2G16210"/>
</dbReference>
<dbReference type="EnsemblPlants" id="AT2G16210.2">
    <molecule id="Q5BPT7-2"/>
    <property type="protein sequence ID" value="AT2G16210.2"/>
    <property type="gene ID" value="AT2G16210"/>
</dbReference>
<dbReference type="GeneID" id="816118"/>
<dbReference type="Gramene" id="AT2G16210.1">
    <molecule id="Q5BPT7-1"/>
    <property type="protein sequence ID" value="AT2G16210.1"/>
    <property type="gene ID" value="AT2G16210"/>
</dbReference>
<dbReference type="Gramene" id="AT2G16210.2">
    <molecule id="Q5BPT7-2"/>
    <property type="protein sequence ID" value="AT2G16210.2"/>
    <property type="gene ID" value="AT2G16210"/>
</dbReference>
<dbReference type="KEGG" id="ath:AT2G16210"/>
<dbReference type="Araport" id="AT2G16210"/>
<dbReference type="TAIR" id="AT2G16210">
    <property type="gene designation" value="REM24"/>
</dbReference>
<dbReference type="HOGENOM" id="CLU_083136_0_0_1"/>
<dbReference type="InParanoid" id="Q5BPT7"/>
<dbReference type="OrthoDB" id="590488at2759"/>
<dbReference type="PhylomeDB" id="Q5BPT7"/>
<dbReference type="PRO" id="PR:Q5BPT7"/>
<dbReference type="Proteomes" id="UP000006548">
    <property type="component" value="Chromosome 2"/>
</dbReference>
<dbReference type="ExpressionAtlas" id="Q5BPT7">
    <property type="expression patterns" value="baseline and differential"/>
</dbReference>
<dbReference type="GO" id="GO:0005634">
    <property type="term" value="C:nucleus"/>
    <property type="evidence" value="ECO:0007669"/>
    <property type="project" value="UniProtKB-SubCell"/>
</dbReference>
<dbReference type="GO" id="GO:0003677">
    <property type="term" value="F:DNA binding"/>
    <property type="evidence" value="ECO:0007669"/>
    <property type="project" value="UniProtKB-KW"/>
</dbReference>
<dbReference type="CDD" id="cd10017">
    <property type="entry name" value="B3_DNA"/>
    <property type="match status" value="1"/>
</dbReference>
<dbReference type="Gene3D" id="2.40.330.10">
    <property type="entry name" value="DNA-binding pseudobarrel domain"/>
    <property type="match status" value="2"/>
</dbReference>
<dbReference type="InterPro" id="IPR003340">
    <property type="entry name" value="B3_DNA-bd"/>
</dbReference>
<dbReference type="InterPro" id="IPR015300">
    <property type="entry name" value="DNA-bd_pseudobarrel_sf"/>
</dbReference>
<dbReference type="InterPro" id="IPR050655">
    <property type="entry name" value="Plant_B3_domain"/>
</dbReference>
<dbReference type="PANTHER" id="PTHR31920">
    <property type="entry name" value="B3 DOMAIN-CONTAINING"/>
    <property type="match status" value="1"/>
</dbReference>
<dbReference type="PANTHER" id="PTHR31920:SF122">
    <property type="entry name" value="B3 DOMAIN-CONTAINING PROTEIN REM23"/>
    <property type="match status" value="1"/>
</dbReference>
<dbReference type="Pfam" id="PF02362">
    <property type="entry name" value="B3"/>
    <property type="match status" value="1"/>
</dbReference>
<dbReference type="SMART" id="SM01019">
    <property type="entry name" value="B3"/>
    <property type="match status" value="2"/>
</dbReference>
<dbReference type="SUPFAM" id="SSF101936">
    <property type="entry name" value="DNA-binding pseudobarrel domain"/>
    <property type="match status" value="2"/>
</dbReference>
<dbReference type="PROSITE" id="PS50863">
    <property type="entry name" value="B3"/>
    <property type="match status" value="2"/>
</dbReference>
<feature type="chain" id="PRO_0000375135" description="B3 domain-containing protein At2g16210">
    <location>
        <begin position="1"/>
        <end position="291"/>
    </location>
</feature>
<feature type="DNA-binding region" description="TF-B3 1" evidence="1">
    <location>
        <begin position="19"/>
        <end position="114"/>
    </location>
</feature>
<feature type="DNA-binding region" description="TF-B3 2" evidence="1">
    <location>
        <begin position="200"/>
        <end position="291"/>
    </location>
</feature>
<feature type="region of interest" description="Disordered" evidence="2">
    <location>
        <begin position="149"/>
        <end position="182"/>
    </location>
</feature>
<feature type="compositionally biased region" description="Polar residues" evidence="2">
    <location>
        <begin position="149"/>
        <end position="159"/>
    </location>
</feature>
<feature type="compositionally biased region" description="Basic and acidic residues" evidence="2">
    <location>
        <begin position="172"/>
        <end position="182"/>
    </location>
</feature>
<feature type="splice variant" id="VSP_037332" description="In isoform 2." evidence="3">
    <original>RI</original>
    <variation>VR</variation>
    <location>
        <begin position="216"/>
        <end position="217"/>
    </location>
</feature>
<feature type="splice variant" id="VSP_037333" description="In isoform 2." evidence="3">
    <location>
        <begin position="218"/>
        <end position="291"/>
    </location>
</feature>
<name>Y2621_ARATH</name>
<accession>Q5BPT7</accession>
<accession>Q84RE7</accession>
<accession>Q84RE8</accession>
<accession>Q9XIG9</accession>
<organism>
    <name type="scientific">Arabidopsis thaliana</name>
    <name type="common">Mouse-ear cress</name>
    <dbReference type="NCBI Taxonomy" id="3702"/>
    <lineage>
        <taxon>Eukaryota</taxon>
        <taxon>Viridiplantae</taxon>
        <taxon>Streptophyta</taxon>
        <taxon>Embryophyta</taxon>
        <taxon>Tracheophyta</taxon>
        <taxon>Spermatophyta</taxon>
        <taxon>Magnoliopsida</taxon>
        <taxon>eudicotyledons</taxon>
        <taxon>Gunneridae</taxon>
        <taxon>Pentapetalae</taxon>
        <taxon>rosids</taxon>
        <taxon>malvids</taxon>
        <taxon>Brassicales</taxon>
        <taxon>Brassicaceae</taxon>
        <taxon>Camelineae</taxon>
        <taxon>Arabidopsis</taxon>
    </lineage>
</organism>